<reference key="1">
    <citation type="journal article" date="2009" name="Nature">
        <title>Evolution of pathogenicity and sexual reproduction in eight Candida genomes.</title>
        <authorList>
            <person name="Butler G."/>
            <person name="Rasmussen M.D."/>
            <person name="Lin M.F."/>
            <person name="Santos M.A.S."/>
            <person name="Sakthikumar S."/>
            <person name="Munro C.A."/>
            <person name="Rheinbay E."/>
            <person name="Grabherr M."/>
            <person name="Forche A."/>
            <person name="Reedy J.L."/>
            <person name="Agrafioti I."/>
            <person name="Arnaud M.B."/>
            <person name="Bates S."/>
            <person name="Brown A.J.P."/>
            <person name="Brunke S."/>
            <person name="Costanzo M.C."/>
            <person name="Fitzpatrick D.A."/>
            <person name="de Groot P.W.J."/>
            <person name="Harris D."/>
            <person name="Hoyer L.L."/>
            <person name="Hube B."/>
            <person name="Klis F.M."/>
            <person name="Kodira C."/>
            <person name="Lennard N."/>
            <person name="Logue M.E."/>
            <person name="Martin R."/>
            <person name="Neiman A.M."/>
            <person name="Nikolaou E."/>
            <person name="Quail M.A."/>
            <person name="Quinn J."/>
            <person name="Santos M.C."/>
            <person name="Schmitzberger F.F."/>
            <person name="Sherlock G."/>
            <person name="Shah P."/>
            <person name="Silverstein K.A.T."/>
            <person name="Skrzypek M.S."/>
            <person name="Soll D."/>
            <person name="Staggs R."/>
            <person name="Stansfield I."/>
            <person name="Stumpf M.P.H."/>
            <person name="Sudbery P.E."/>
            <person name="Srikantha T."/>
            <person name="Zeng Q."/>
            <person name="Berman J."/>
            <person name="Berriman M."/>
            <person name="Heitman J."/>
            <person name="Gow N.A.R."/>
            <person name="Lorenz M.C."/>
            <person name="Birren B.W."/>
            <person name="Kellis M."/>
            <person name="Cuomo C.A."/>
        </authorList>
    </citation>
    <scope>NUCLEOTIDE SEQUENCE [LARGE SCALE GENOMIC DNA]</scope>
    <source>
        <strain>CDC 317 / ATCC MYA-4646</strain>
    </source>
</reference>
<reference key="2">
    <citation type="journal article" date="2011" name="BMC Genomics">
        <title>Using RNA-seq to determine the transcriptional landscape and the hypoxic response of the pathogenic yeast Candida parapsilosis.</title>
        <authorList>
            <person name="Guida A."/>
            <person name="Lindstaedt C."/>
            <person name="Maguire S.L."/>
            <person name="Ding C."/>
            <person name="Higgins D.G."/>
            <person name="Corton N.J."/>
            <person name="Berriman M."/>
            <person name="Butler G."/>
        </authorList>
    </citation>
    <scope>GENOME REANNOTATION</scope>
    <source>
        <strain>CDC 317 / ATCC MYA-4646</strain>
    </source>
</reference>
<reference key="3">
    <citation type="journal article" date="2016" name="Nucleic Acids Res.">
        <title>The structure and DNA-binding properties of Mgm101 from a yeast with a linear mitochondrial genome.</title>
        <authorList>
            <person name="Pevala V."/>
            <person name="Truban D."/>
            <person name="Bauer J.A."/>
            <person name="Kostan J."/>
            <person name="Kunova N."/>
            <person name="Bellova J."/>
            <person name="Brandstetter M."/>
            <person name="Marini V."/>
            <person name="Krejci L."/>
            <person name="Tomaska L."/>
            <person name="Nosek J."/>
            <person name="Kutejova E."/>
        </authorList>
    </citation>
    <scope>FUNCTION</scope>
    <scope>SUBCELLULAR LOCATION</scope>
    <scope>SUBUNIT</scope>
    <scope>STRUCTURE BY ELECTRON MICROSCOPY OF THE MGM101-DNA COMPLEX</scope>
</reference>
<accession>G8B839</accession>
<sequence>MLHSTKLVFRATPQALCFPVRSYSRYVRTVPKTASAKTTSKLAPSITTEDEVAEQDPSLQEPQSATSTASFAFHDAPPETRSVLNSSTNNNIDWSDSYHGLGSQPFSREIADILLAPIKDQDIEIKPDGLLYLPEIKYRRILNKAFGPGGWGLVPRTESLITKSQISREYGLICHGRLISIARGEQDYFGGEEKVTTALEGCKSNALMRCCKDLGIASELWDPGFIRKWKAKYCEEVFVEHVVNKKKKKLWKLKSNKKIEYPYKQL</sequence>
<keyword id="KW-0227">DNA damage</keyword>
<keyword id="KW-0234">DNA repair</keyword>
<keyword id="KW-0238">DNA-binding</keyword>
<keyword id="KW-0496">Mitochondrion</keyword>
<keyword id="KW-1135">Mitochondrion nucleoid</keyword>
<keyword id="KW-1185">Reference proteome</keyword>
<keyword id="KW-0809">Transit peptide</keyword>
<comment type="function">
    <text evidence="3">Plays a role in the replication of the mitochondrial genome and the maintenance of its telomeres (PubMed:26743001). Able to catalyze strand annealing and D-loop formation (PubMed:26743001). Binds a wide variety of DNA substrates (PubMed:26743001). Exhibited the highest affinity for DNA molecules carrying 3' ssDNA overhangs (Y-form, 3' FLAP, 3' overhang) and for substrates with complex structures (X-O and Fork) (PubMed:26743001). Forms homogeneous ring-shaped structures at the ssDNA native telomeres ends (PubMed:26743001). Oligomers seem to bind to the ssDNA as a filament until they reach the double-stranded region and induce the formation of bends and loops within the double-stranded part of the molecules (PubMed:26743001).</text>
</comment>
<comment type="subunit">
    <text evidence="3">Forms homooligomers in vitro (PubMed:26743001).</text>
</comment>
<comment type="subcellular location">
    <subcellularLocation>
        <location evidence="3">Mitochondrion matrix</location>
        <location evidence="3">Mitochondrion nucleoid</location>
    </subcellularLocation>
</comment>
<comment type="similarity">
    <text evidence="5">Belongs to the MGM101 family.</text>
</comment>
<organism>
    <name type="scientific">Candida parapsilosis (strain CDC 317 / ATCC MYA-4646)</name>
    <name type="common">Yeast</name>
    <name type="synonym">Monilia parapsilosis</name>
    <dbReference type="NCBI Taxonomy" id="578454"/>
    <lineage>
        <taxon>Eukaryota</taxon>
        <taxon>Fungi</taxon>
        <taxon>Dikarya</taxon>
        <taxon>Ascomycota</taxon>
        <taxon>Saccharomycotina</taxon>
        <taxon>Pichiomycetes</taxon>
        <taxon>Debaryomycetaceae</taxon>
        <taxon>Candida/Lodderomyces clade</taxon>
        <taxon>Candida</taxon>
    </lineage>
</organism>
<dbReference type="EMBL" id="HE605203">
    <property type="protein sequence ID" value="CCE40624.1"/>
    <property type="molecule type" value="Genomic_DNA"/>
</dbReference>
<dbReference type="STRING" id="578454.G8B839"/>
<dbReference type="EnsemblFungi" id="CPAR2_106590-T">
    <property type="protein sequence ID" value="CPAR2_106590-T-p1"/>
    <property type="gene ID" value="CPAR2_106590"/>
</dbReference>
<dbReference type="CGD" id="CAL0000156327">
    <property type="gene designation" value="MGM101"/>
</dbReference>
<dbReference type="VEuPathDB" id="FungiDB:CPAR2_106590"/>
<dbReference type="eggNOG" id="ENOG502RXU4">
    <property type="taxonomic scope" value="Eukaryota"/>
</dbReference>
<dbReference type="Proteomes" id="UP000005221">
    <property type="component" value="Chromosome 1"/>
</dbReference>
<dbReference type="GO" id="GO:0000262">
    <property type="term" value="C:mitochondrial chromosome"/>
    <property type="evidence" value="ECO:0007669"/>
    <property type="project" value="InterPro"/>
</dbReference>
<dbReference type="GO" id="GO:0042645">
    <property type="term" value="C:mitochondrial nucleoid"/>
    <property type="evidence" value="ECO:0000314"/>
    <property type="project" value="CGD"/>
</dbReference>
<dbReference type="GO" id="GO:0005634">
    <property type="term" value="C:nucleus"/>
    <property type="evidence" value="ECO:0000314"/>
    <property type="project" value="CGD"/>
</dbReference>
<dbReference type="GO" id="GO:0003690">
    <property type="term" value="F:double-stranded DNA binding"/>
    <property type="evidence" value="ECO:0000314"/>
    <property type="project" value="CGD"/>
</dbReference>
<dbReference type="GO" id="GO:0003697">
    <property type="term" value="F:single-stranded DNA binding"/>
    <property type="evidence" value="ECO:0000314"/>
    <property type="project" value="CGD"/>
</dbReference>
<dbReference type="GO" id="GO:0036297">
    <property type="term" value="P:interstrand cross-link repair"/>
    <property type="evidence" value="ECO:0007669"/>
    <property type="project" value="EnsemblFungi"/>
</dbReference>
<dbReference type="GO" id="GO:0000002">
    <property type="term" value="P:mitochondrial genome maintenance"/>
    <property type="evidence" value="ECO:0000314"/>
    <property type="project" value="CGD"/>
</dbReference>
<dbReference type="GO" id="GO:0000725">
    <property type="term" value="P:recombinational repair"/>
    <property type="evidence" value="ECO:0007669"/>
    <property type="project" value="EnsemblFungi"/>
</dbReference>
<dbReference type="InterPro" id="IPR009446">
    <property type="entry name" value="Mgm101"/>
</dbReference>
<dbReference type="PANTHER" id="PTHR31404">
    <property type="entry name" value="MITOCHONDRIAL GENOME MAINTENANCE PROTEIN MGM101"/>
    <property type="match status" value="1"/>
</dbReference>
<dbReference type="PANTHER" id="PTHR31404:SF0">
    <property type="entry name" value="MITOCHONDRIAL GENOME MAINTENANCE PROTEIN MGM101"/>
    <property type="match status" value="1"/>
</dbReference>
<dbReference type="Pfam" id="PF06420">
    <property type="entry name" value="Mgm101p"/>
    <property type="match status" value="1"/>
</dbReference>
<name>MG101_CANPC</name>
<evidence type="ECO:0000255" key="1"/>
<evidence type="ECO:0000256" key="2">
    <source>
        <dbReference type="SAM" id="MobiDB-lite"/>
    </source>
</evidence>
<evidence type="ECO:0000269" key="3">
    <source>
    </source>
</evidence>
<evidence type="ECO:0000303" key="4">
    <source>
    </source>
</evidence>
<evidence type="ECO:0000305" key="5"/>
<feature type="transit peptide" description="Mitochondrion" evidence="1">
    <location>
        <begin position="1"/>
        <end position="23"/>
    </location>
</feature>
<feature type="chain" id="PRO_0000436005" description="Mitochondrial genome maintenance protein MGM101" evidence="1">
    <location>
        <begin position="24"/>
        <end position="266"/>
    </location>
</feature>
<feature type="region of interest" description="Disordered" evidence="2">
    <location>
        <begin position="37"/>
        <end position="68"/>
    </location>
</feature>
<feature type="compositionally biased region" description="Polar residues" evidence="2">
    <location>
        <begin position="37"/>
        <end position="47"/>
    </location>
</feature>
<feature type="compositionally biased region" description="Polar residues" evidence="2">
    <location>
        <begin position="57"/>
        <end position="68"/>
    </location>
</feature>
<proteinExistence type="evidence at protein level"/>
<protein>
    <recommendedName>
        <fullName evidence="5">Mitochondrial genome maintenance protein MGM101</fullName>
    </recommendedName>
</protein>
<gene>
    <name evidence="4" type="primary">MGM101</name>
    <name type="ordered locus">CPAR2_106590</name>
</gene>